<dbReference type="EC" id="1.5.1.19"/>
<dbReference type="EMBL" id="V00087">
    <property type="protein sequence ID" value="CAA23427.1"/>
    <property type="molecule type" value="Genomic_DNA"/>
</dbReference>
<dbReference type="PIR" id="A92833">
    <property type="entry name" value="DEAGNT"/>
</dbReference>
<dbReference type="SMR" id="P00386"/>
<dbReference type="BioCyc" id="MetaCyc:MONOMER-18212"/>
<dbReference type="GO" id="GO:0047829">
    <property type="term" value="F:D-nopaline dehydrogenase activity"/>
    <property type="evidence" value="ECO:0007669"/>
    <property type="project" value="UniProtKB-EC"/>
</dbReference>
<dbReference type="GO" id="GO:0051287">
    <property type="term" value="F:NAD binding"/>
    <property type="evidence" value="ECO:0007669"/>
    <property type="project" value="InterPro"/>
</dbReference>
<dbReference type="GO" id="GO:0016616">
    <property type="term" value="F:oxidoreductase activity, acting on the CH-OH group of donors, NAD or NADP as acceptor"/>
    <property type="evidence" value="ECO:0007669"/>
    <property type="project" value="InterPro"/>
</dbReference>
<dbReference type="GO" id="GO:0046168">
    <property type="term" value="P:glycerol-3-phosphate catabolic process"/>
    <property type="evidence" value="ECO:0007669"/>
    <property type="project" value="InterPro"/>
</dbReference>
<dbReference type="Gene3D" id="1.10.1040.10">
    <property type="entry name" value="N-(1-d-carboxylethyl)-l-norvaline Dehydrogenase, domain 2"/>
    <property type="match status" value="1"/>
</dbReference>
<dbReference type="Gene3D" id="3.40.50.720">
    <property type="entry name" value="NAD(P)-binding Rossmann-like Domain"/>
    <property type="match status" value="1"/>
</dbReference>
<dbReference type="InterPro" id="IPR008927">
    <property type="entry name" value="6-PGluconate_DH-like_C_sf"/>
</dbReference>
<dbReference type="InterPro" id="IPR013328">
    <property type="entry name" value="6PGD_dom2"/>
</dbReference>
<dbReference type="InterPro" id="IPR011128">
    <property type="entry name" value="G3P_DH_NAD-dep_N"/>
</dbReference>
<dbReference type="InterPro" id="IPR036291">
    <property type="entry name" value="NAD(P)-bd_dom_sf"/>
</dbReference>
<dbReference type="InterPro" id="IPR003421">
    <property type="entry name" value="Opine_DH"/>
</dbReference>
<dbReference type="Pfam" id="PF01210">
    <property type="entry name" value="NAD_Gly3P_dh_N"/>
    <property type="match status" value="1"/>
</dbReference>
<dbReference type="Pfam" id="PF02317">
    <property type="entry name" value="Octopine_DH"/>
    <property type="match status" value="1"/>
</dbReference>
<dbReference type="SUPFAM" id="SSF48179">
    <property type="entry name" value="6-phosphogluconate dehydrogenase C-terminal domain-like"/>
    <property type="match status" value="1"/>
</dbReference>
<dbReference type="SUPFAM" id="SSF51735">
    <property type="entry name" value="NAD(P)-binding Rossmann-fold domains"/>
    <property type="match status" value="1"/>
</dbReference>
<accession>P00386</accession>
<geneLocation type="plasmid">
    <name>pTiT37</name>
</geneLocation>
<organism>
    <name type="scientific">Agrobacterium tumefaciens (strain T37)</name>
    <dbReference type="NCBI Taxonomy" id="176300"/>
    <lineage>
        <taxon>Bacteria</taxon>
        <taxon>Pseudomonadati</taxon>
        <taxon>Pseudomonadota</taxon>
        <taxon>Alphaproteobacteria</taxon>
        <taxon>Hyphomicrobiales</taxon>
        <taxon>Rhizobiaceae</taxon>
        <taxon>Rhizobium/Agrobacterium group</taxon>
        <taxon>Agrobacterium</taxon>
        <taxon>Agrobacterium tumefaciens complex</taxon>
    </lineage>
</organism>
<name>DHNO_AGRT7</name>
<proteinExistence type="inferred from homology"/>
<comment type="catalytic activity">
    <reaction>
        <text>D-nopaline + NADP(+) + H2O = L-arginine + 2-oxoglutarate + NADPH + H(+)</text>
        <dbReference type="Rhea" id="RHEA:19637"/>
        <dbReference type="ChEBI" id="CHEBI:15377"/>
        <dbReference type="ChEBI" id="CHEBI:15378"/>
        <dbReference type="ChEBI" id="CHEBI:16810"/>
        <dbReference type="ChEBI" id="CHEBI:32682"/>
        <dbReference type="ChEBI" id="CHEBI:57783"/>
        <dbReference type="ChEBI" id="CHEBI:58074"/>
        <dbReference type="ChEBI" id="CHEBI:58349"/>
        <dbReference type="EC" id="1.5.1.19"/>
    </reaction>
</comment>
<comment type="subunit">
    <text>Homotetramer.</text>
</comment>
<comment type="similarity">
    <text evidence="1">Belongs to the lysopine/nopaline/octopine/opine/vitopine dehydrogenases family.</text>
</comment>
<gene>
    <name type="primary">nos</name>
</gene>
<evidence type="ECO:0000305" key="1"/>
<sequence length="413" mass="45387">MAITLSATSLPISAADHHPLPLTVGVLGSGHAGTALAAWFASRHVPTALWAPADHPGSISAIKANEGVITTEGMINGPFRVSACDDLAAVIRSSRVLIIVTRADVHDSFVNELANFNGELATKDIVVVCGHGFSIKYERQLRFKRIFETDNSPITSKLSDQKKCNVNIKEMKASFGLSCFPIHRDDAGVIDLPEDTKNIFAQLFSARIICIPPLQVLFFSNCITHAVPAVMNIGRLRDPANSLTKRAEKWLLELDERTPRAEKGFFFYGEGSNTYVCNVQEQIDHERRKVAAACGLRLNSLLQECNDEYDTDYETLREYCLAPSPHNVHHACPDNMEHRYFSEELCSLEDVAAIAAIANIELPLTHAFINIIHAGKGKINPTGKSSSVIGNFSSSDLIRFGATHVFNKDEMVE</sequence>
<keyword id="KW-0192">Crown gall tumor</keyword>
<keyword id="KW-0521">NADP</keyword>
<keyword id="KW-0560">Oxidoreductase</keyword>
<keyword id="KW-0614">Plasmid</keyword>
<reference key="1">
    <citation type="journal article" date="1982" name="J. Mol. Appl. Genet.">
        <title>Nopaline synthase: transcript mapping and DNA sequence.</title>
        <authorList>
            <person name="Depicker A."/>
            <person name="Stachel S."/>
            <person name="Dhaese P."/>
            <person name="Zambryski P."/>
            <person name="Goodman H.M."/>
        </authorList>
    </citation>
    <scope>NUCLEOTIDE SEQUENCE [GENOMIC DNA]</scope>
</reference>
<reference key="2">
    <citation type="journal article" date="1983" name="Nucleic Acids Res.">
        <title>Structure and transcription of the nopaline synthase gene region of T-DNA.</title>
        <authorList>
            <person name="Bevan M."/>
            <person name="Barnes W.M."/>
            <person name="Chilton M.-D."/>
        </authorList>
    </citation>
    <scope>NUCLEOTIDE SEQUENCE [GENOMIC DNA]</scope>
</reference>
<feature type="chain" id="PRO_0000179983" description="D-nopaline dehydrogenase">
    <location>
        <begin position="1"/>
        <end position="413"/>
    </location>
</feature>
<feature type="sequence conflict" description="In Ref. 2." evidence="1" ref="2">
    <original>C</original>
    <variation>Y</variation>
    <location>
        <position position="222"/>
    </location>
</feature>
<feature type="sequence conflict" description="In Ref. 2." evidence="1" ref="2">
    <original>N</original>
    <variation>K</variation>
    <location>
        <position position="359"/>
    </location>
</feature>
<feature type="sequence conflict" description="In Ref. 2." evidence="1" ref="2">
    <original>L</original>
    <variation>I</variation>
    <location>
        <position position="362"/>
    </location>
</feature>
<protein>
    <recommendedName>
        <fullName>D-nopaline dehydrogenase</fullName>
        <ecNumber>1.5.1.19</ecNumber>
    </recommendedName>
    <alternativeName>
        <fullName>Nopaline synthase</fullName>
    </alternativeName>
</protein>